<accession>Q09YJ6</accession>
<protein>
    <recommendedName>
        <fullName>Protein Wnt-2</fullName>
    </recommendedName>
</protein>
<comment type="function">
    <text evidence="1">Ligand for members of the frizzled family of seven transmembrane receptors. Probable developmental protein. May be a signaling molecule which affects the development of discrete regions of tissues. Is likely to signal over only few cell diameters (By similarity).</text>
</comment>
<comment type="subcellular location">
    <subcellularLocation>
        <location evidence="1">Secreted</location>
        <location evidence="1">Extracellular space</location>
        <location evidence="1">Extracellular matrix</location>
    </subcellularLocation>
</comment>
<comment type="PTM">
    <text evidence="2 4">Palmitoleoylation is required for efficient binding to frizzled receptors. Depalmitoleoylation leads to Wnt signaling pathway inhibition.</text>
</comment>
<comment type="similarity">
    <text evidence="6">Belongs to the Wnt family.</text>
</comment>
<gene>
    <name type="primary">WNT2</name>
</gene>
<evidence type="ECO:0000250" key="1"/>
<evidence type="ECO:0000250" key="2">
    <source>
        <dbReference type="UniProtKB" id="P27467"/>
    </source>
</evidence>
<evidence type="ECO:0000250" key="3">
    <source>
        <dbReference type="UniProtKB" id="P28026"/>
    </source>
</evidence>
<evidence type="ECO:0000250" key="4">
    <source>
        <dbReference type="UniProtKB" id="P56704"/>
    </source>
</evidence>
<evidence type="ECO:0000255" key="5"/>
<evidence type="ECO:0000305" key="6"/>
<sequence>MNACLVGIWLWLPLLFTWLSPEVSSSWWYMRATSGSSRVMCDNVPGLVSHQRQLCHRHPDVMRAIGLGVTEWTMECQHQFRQHRWNCNTLDRDHSLFGRVLLRSSRESAFVYAISSAGVVFAITRACSQGELKSCSCDPKKKGTAKDNKGTFDWGGCSDNIDYGIKFARAFVDAKERKGKDARALMNLHNNRAGRKAVKRFLKQECKCHGVSGSCTLRTCWLAMADFRKTGNYLWRKYNGAIQVVMNQDGTGFTVANKRFKKPTKNDLVYFENSPDYCIRDRDAGSLGTAGRVCNLTSRGMDSCEVMCCGRGYDTSHITRKTKCECKFHWCCAVRCQDCVEALDVHTCKAPKSPDWAAPT</sequence>
<name>WNT2_MUNMU</name>
<proteinExistence type="inferred from homology"/>
<dbReference type="EMBL" id="DP000178">
    <property type="protein sequence ID" value="ABI75284.1"/>
    <property type="molecule type" value="Genomic_DNA"/>
</dbReference>
<dbReference type="SMR" id="Q09YJ6"/>
<dbReference type="GlyCosmos" id="Q09YJ6">
    <property type="glycosylation" value="1 site, No reported glycans"/>
</dbReference>
<dbReference type="GO" id="GO:0005615">
    <property type="term" value="C:extracellular space"/>
    <property type="evidence" value="ECO:0007669"/>
    <property type="project" value="TreeGrafter"/>
</dbReference>
<dbReference type="GO" id="GO:0005125">
    <property type="term" value="F:cytokine activity"/>
    <property type="evidence" value="ECO:0007669"/>
    <property type="project" value="TreeGrafter"/>
</dbReference>
<dbReference type="GO" id="GO:0005109">
    <property type="term" value="F:frizzled binding"/>
    <property type="evidence" value="ECO:0007669"/>
    <property type="project" value="TreeGrafter"/>
</dbReference>
<dbReference type="GO" id="GO:0048513">
    <property type="term" value="P:animal organ development"/>
    <property type="evidence" value="ECO:0007669"/>
    <property type="project" value="UniProtKB-ARBA"/>
</dbReference>
<dbReference type="GO" id="GO:0060070">
    <property type="term" value="P:canonical Wnt signaling pathway"/>
    <property type="evidence" value="ECO:0007669"/>
    <property type="project" value="TreeGrafter"/>
</dbReference>
<dbReference type="GO" id="GO:0045165">
    <property type="term" value="P:cell fate commitment"/>
    <property type="evidence" value="ECO:0007669"/>
    <property type="project" value="TreeGrafter"/>
</dbReference>
<dbReference type="GO" id="GO:0030182">
    <property type="term" value="P:neuron differentiation"/>
    <property type="evidence" value="ECO:0007669"/>
    <property type="project" value="TreeGrafter"/>
</dbReference>
<dbReference type="CDD" id="cd19345">
    <property type="entry name" value="Wnt_Wnt2"/>
    <property type="match status" value="1"/>
</dbReference>
<dbReference type="FunFam" id="3.30.2460.20:FF:000001">
    <property type="entry name" value="Wnt homolog"/>
    <property type="match status" value="1"/>
</dbReference>
<dbReference type="Gene3D" id="3.30.2460.20">
    <property type="match status" value="1"/>
</dbReference>
<dbReference type="InterPro" id="IPR005817">
    <property type="entry name" value="Wnt"/>
</dbReference>
<dbReference type="InterPro" id="IPR009140">
    <property type="entry name" value="Wnt2"/>
</dbReference>
<dbReference type="InterPro" id="IPR043158">
    <property type="entry name" value="Wnt_C"/>
</dbReference>
<dbReference type="InterPro" id="IPR018161">
    <property type="entry name" value="Wnt_CS"/>
</dbReference>
<dbReference type="PANTHER" id="PTHR12027:SF86">
    <property type="entry name" value="PROTEIN WNT-2"/>
    <property type="match status" value="1"/>
</dbReference>
<dbReference type="PANTHER" id="PTHR12027">
    <property type="entry name" value="WNT RELATED"/>
    <property type="match status" value="1"/>
</dbReference>
<dbReference type="Pfam" id="PF00110">
    <property type="entry name" value="wnt"/>
    <property type="match status" value="1"/>
</dbReference>
<dbReference type="PRINTS" id="PR01842">
    <property type="entry name" value="WNT2PROTEIN"/>
</dbReference>
<dbReference type="PRINTS" id="PR01349">
    <property type="entry name" value="WNTPROTEIN"/>
</dbReference>
<dbReference type="SMART" id="SM00097">
    <property type="entry name" value="WNT1"/>
    <property type="match status" value="1"/>
</dbReference>
<dbReference type="PROSITE" id="PS00246">
    <property type="entry name" value="WNT1"/>
    <property type="match status" value="1"/>
</dbReference>
<reference key="1">
    <citation type="submission" date="2006-09" db="EMBL/GenBank/DDBJ databases">
        <title>NISC comparative sequencing initiative.</title>
        <authorList>
            <person name="Antonellis A."/>
            <person name="Ayele K."/>
            <person name="Benjamin B."/>
            <person name="Blakesley R.W."/>
            <person name="Boakye A."/>
            <person name="Bouffard G.G."/>
            <person name="Brinkley C."/>
            <person name="Brooks S."/>
            <person name="Chu G."/>
            <person name="Coleman H."/>
            <person name="Engle J."/>
            <person name="Gestole M."/>
            <person name="Greene A."/>
            <person name="Guan X."/>
            <person name="Gupta J."/>
            <person name="Haghighi P."/>
            <person name="Han J."/>
            <person name="Hansen N."/>
            <person name="Ho S.-L."/>
            <person name="Hu P."/>
            <person name="Hunter G."/>
            <person name="Hurle B."/>
            <person name="Idol J.R."/>
            <person name="Kwong P."/>
            <person name="Laric P."/>
            <person name="Larson S."/>
            <person name="Lee-Lin S.-Q."/>
            <person name="Legaspi R."/>
            <person name="Madden M."/>
            <person name="Maduro Q.L."/>
            <person name="Maduro V.B."/>
            <person name="Margulies E.H."/>
            <person name="Masiello C."/>
            <person name="Maskeri B."/>
            <person name="McDowell J."/>
            <person name="Mojidi H.A."/>
            <person name="Mullikin J.C."/>
            <person name="Oestreicher J.S."/>
            <person name="Park M."/>
            <person name="Portnoy M.E."/>
            <person name="Prasad A."/>
            <person name="Puri O."/>
            <person name="Reddix-Dugue N."/>
            <person name="Schandler K."/>
            <person name="Schueler M.G."/>
            <person name="Sison C."/>
            <person name="Stantripop S."/>
            <person name="Stephen E."/>
            <person name="Taye A."/>
            <person name="Thomas J.W."/>
            <person name="Thomas P.J."/>
            <person name="Tsipouri V."/>
            <person name="Ung L."/>
            <person name="Vogt J.L."/>
            <person name="Wetherby K.D."/>
            <person name="Young A."/>
            <person name="Green E.D."/>
        </authorList>
    </citation>
    <scope>NUCLEOTIDE SEQUENCE [LARGE SCALE GENOMIC DNA]</scope>
</reference>
<feature type="signal peptide" evidence="5">
    <location>
        <begin position="1"/>
        <end position="25"/>
    </location>
</feature>
<feature type="chain" id="PRO_0000260342" description="Protein Wnt-2">
    <location>
        <begin position="26"/>
        <end position="360"/>
    </location>
</feature>
<feature type="lipid moiety-binding region" description="O-palmitoleoyl serine; by PORCN" evidence="4">
    <location>
        <position position="212"/>
    </location>
</feature>
<feature type="glycosylation site" description="N-linked (GlcNAc...) asparagine" evidence="5">
    <location>
        <position position="295"/>
    </location>
</feature>
<feature type="disulfide bond" evidence="3">
    <location>
        <begin position="76"/>
        <end position="87"/>
    </location>
</feature>
<feature type="disulfide bond" evidence="3">
    <location>
        <begin position="127"/>
        <end position="135"/>
    </location>
</feature>
<feature type="disulfide bond" evidence="3">
    <location>
        <begin position="137"/>
        <end position="157"/>
    </location>
</feature>
<feature type="disulfide bond" evidence="3">
    <location>
        <begin position="206"/>
        <end position="220"/>
    </location>
</feature>
<feature type="disulfide bond" evidence="3">
    <location>
        <begin position="208"/>
        <end position="215"/>
    </location>
</feature>
<feature type="disulfide bond" evidence="3">
    <location>
        <begin position="278"/>
        <end position="309"/>
    </location>
</feature>
<feature type="disulfide bond" evidence="3">
    <location>
        <begin position="294"/>
        <end position="304"/>
    </location>
</feature>
<feature type="disulfide bond" evidence="3">
    <location>
        <begin position="308"/>
        <end position="348"/>
    </location>
</feature>
<feature type="disulfide bond" evidence="3">
    <location>
        <begin position="324"/>
        <end position="339"/>
    </location>
</feature>
<feature type="disulfide bond" evidence="3">
    <location>
        <begin position="326"/>
        <end position="336"/>
    </location>
</feature>
<feature type="disulfide bond" evidence="3">
    <location>
        <begin position="331"/>
        <end position="332"/>
    </location>
</feature>
<keyword id="KW-0217">Developmental protein</keyword>
<keyword id="KW-1015">Disulfide bond</keyword>
<keyword id="KW-0272">Extracellular matrix</keyword>
<keyword id="KW-0325">Glycoprotein</keyword>
<keyword id="KW-0449">Lipoprotein</keyword>
<keyword id="KW-0964">Secreted</keyword>
<keyword id="KW-0732">Signal</keyword>
<keyword id="KW-0879">Wnt signaling pathway</keyword>
<organism>
    <name type="scientific">Muntiacus muntjak</name>
    <name type="common">Barking deer</name>
    <name type="synonym">Indian muntjac</name>
    <dbReference type="NCBI Taxonomy" id="9888"/>
    <lineage>
        <taxon>Eukaryota</taxon>
        <taxon>Metazoa</taxon>
        <taxon>Chordata</taxon>
        <taxon>Craniata</taxon>
        <taxon>Vertebrata</taxon>
        <taxon>Euteleostomi</taxon>
        <taxon>Mammalia</taxon>
        <taxon>Eutheria</taxon>
        <taxon>Laurasiatheria</taxon>
        <taxon>Artiodactyla</taxon>
        <taxon>Ruminantia</taxon>
        <taxon>Pecora</taxon>
        <taxon>Cervidae</taxon>
        <taxon>Muntiacinae</taxon>
        <taxon>Muntiacus</taxon>
    </lineage>
</organism>